<proteinExistence type="evidence at transcript level"/>
<gene>
    <name type="primary">ATP2A2</name>
</gene>
<protein>
    <recommendedName>
        <fullName>Sarcoplasmic/endoplasmic reticulum calcium ATPase 2</fullName>
        <shortName>SERCA2</shortName>
        <shortName>SR Ca(2+)-ATPase 2</shortName>
        <ecNumber>7.2.2.10</ecNumber>
    </recommendedName>
    <alternativeName>
        <fullName>Calcium pump 2</fullName>
    </alternativeName>
    <alternativeName>
        <fullName>Calcium-transporting ATPase sarcoplasmic reticulum type, slow twitch skeletal muscle isoform</fullName>
    </alternativeName>
    <alternativeName>
        <fullName>Endoplasmic reticulum class 1/2 Ca(2+) ATPase</fullName>
    </alternativeName>
</protein>
<evidence type="ECO:0000250" key="1"/>
<evidence type="ECO:0000250" key="2">
    <source>
        <dbReference type="UniProtKB" id="O46674"/>
    </source>
</evidence>
<evidence type="ECO:0000250" key="3">
    <source>
        <dbReference type="UniProtKB" id="O55143"/>
    </source>
</evidence>
<evidence type="ECO:0000250" key="4">
    <source>
        <dbReference type="UniProtKB" id="P04191"/>
    </source>
</evidence>
<evidence type="ECO:0000250" key="5">
    <source>
        <dbReference type="UniProtKB" id="P11507"/>
    </source>
</evidence>
<evidence type="ECO:0000250" key="6">
    <source>
        <dbReference type="UniProtKB" id="P11607"/>
    </source>
</evidence>
<evidence type="ECO:0000250" key="7">
    <source>
        <dbReference type="UniProtKB" id="P16615"/>
    </source>
</evidence>
<evidence type="ECO:0000250" key="8">
    <source>
        <dbReference type="UniProtKB" id="Q64578"/>
    </source>
</evidence>
<evidence type="ECO:0000250" key="9">
    <source>
        <dbReference type="UniProtKB" id="Q8R429"/>
    </source>
</evidence>
<evidence type="ECO:0000255" key="10"/>
<evidence type="ECO:0000305" key="11"/>
<keyword id="KW-0025">Alternative splicing</keyword>
<keyword id="KW-0067">ATP-binding</keyword>
<keyword id="KW-0106">Calcium</keyword>
<keyword id="KW-0109">Calcium transport</keyword>
<keyword id="KW-1015">Disulfide bond</keyword>
<keyword id="KW-0256">Endoplasmic reticulum</keyword>
<keyword id="KW-0406">Ion transport</keyword>
<keyword id="KW-0460">Magnesium</keyword>
<keyword id="KW-0472">Membrane</keyword>
<keyword id="KW-0479">Metal-binding</keyword>
<keyword id="KW-0944">Nitration</keyword>
<keyword id="KW-0547">Nucleotide-binding</keyword>
<keyword id="KW-0597">Phosphoprotein</keyword>
<keyword id="KW-1185">Reference proteome</keyword>
<keyword id="KW-0703">Sarcoplasmic reticulum</keyword>
<keyword id="KW-1278">Translocase</keyword>
<keyword id="KW-0812">Transmembrane</keyword>
<keyword id="KW-1133">Transmembrane helix</keyword>
<keyword id="KW-0813">Transport</keyword>
<feature type="chain" id="PRO_0000046195" description="Sarcoplasmic/endoplasmic reticulum calcium ATPase 2">
    <location>
        <begin position="1"/>
        <end position="997"/>
    </location>
</feature>
<feature type="topological domain" description="Cytoplasmic" evidence="11">
    <location>
        <begin position="1"/>
        <end position="48"/>
    </location>
</feature>
<feature type="transmembrane region" description="Helical; Name=1" evidence="4">
    <location>
        <begin position="49"/>
        <end position="69"/>
    </location>
</feature>
<feature type="topological domain" description="Lumenal" evidence="11">
    <location>
        <begin position="70"/>
        <end position="89"/>
    </location>
</feature>
<feature type="transmembrane region" description="Helical; Name=2" evidence="4">
    <location>
        <begin position="90"/>
        <end position="110"/>
    </location>
</feature>
<feature type="topological domain" description="Cytoplasmic" evidence="11">
    <location>
        <begin position="111"/>
        <end position="253"/>
    </location>
</feature>
<feature type="transmembrane region" description="Helical; Name=3" evidence="4">
    <location>
        <begin position="254"/>
        <end position="273"/>
    </location>
</feature>
<feature type="topological domain" description="Lumenal" evidence="11">
    <location>
        <begin position="274"/>
        <end position="295"/>
    </location>
</feature>
<feature type="transmembrane region" description="Helical; Name=4" evidence="4">
    <location>
        <begin position="296"/>
        <end position="313"/>
    </location>
</feature>
<feature type="topological domain" description="Cytoplasmic" evidence="11">
    <location>
        <begin position="314"/>
        <end position="756"/>
    </location>
</feature>
<feature type="transmembrane region" description="Helical; Name=5" evidence="4">
    <location>
        <begin position="757"/>
        <end position="776"/>
    </location>
</feature>
<feature type="topological domain" description="Lumenal" evidence="11">
    <location>
        <begin position="777"/>
        <end position="786"/>
    </location>
</feature>
<feature type="transmembrane region" description="Helical; Name=6" evidence="4">
    <location>
        <begin position="787"/>
        <end position="807"/>
    </location>
</feature>
<feature type="topological domain" description="Cytoplasmic" evidence="11">
    <location>
        <begin position="808"/>
        <end position="827"/>
    </location>
</feature>
<feature type="transmembrane region" description="Helical; Name=7" evidence="4">
    <location>
        <begin position="828"/>
        <end position="850"/>
    </location>
</feature>
<feature type="topological domain" description="Lumenal" evidence="11">
    <location>
        <begin position="851"/>
        <end position="896"/>
    </location>
</feature>
<feature type="transmembrane region" description="Helical; Name=8" evidence="4">
    <location>
        <begin position="897"/>
        <end position="916"/>
    </location>
</feature>
<feature type="topological domain" description="Cytoplasmic" evidence="11">
    <location>
        <begin position="917"/>
        <end position="929"/>
    </location>
</feature>
<feature type="transmembrane region" description="Helical; Name=9" evidence="4">
    <location>
        <begin position="930"/>
        <end position="948"/>
    </location>
</feature>
<feature type="topological domain" description="Lumenal" evidence="11">
    <location>
        <begin position="949"/>
        <end position="963"/>
    </location>
</feature>
<feature type="transmembrane region" description="Helical; Name=10" evidence="4">
    <location>
        <begin position="964"/>
        <end position="984"/>
    </location>
</feature>
<feature type="topological domain" description="Cytoplasmic" evidence="11">
    <location>
        <begin position="985"/>
        <end position="997"/>
    </location>
</feature>
<feature type="region of interest" description="Interaction with HAX1" evidence="1">
    <location>
        <begin position="575"/>
        <end position="594"/>
    </location>
</feature>
<feature type="region of interest" description="Interaction with PLN" evidence="4">
    <location>
        <begin position="787"/>
        <end position="807"/>
    </location>
</feature>
<feature type="region of interest" description="Interaction with TMEM64 and PDIA3" evidence="3">
    <location>
        <begin position="788"/>
        <end position="997"/>
    </location>
</feature>
<feature type="region of interest" description="Interaction with PLN" evidence="4">
    <location>
        <begin position="931"/>
        <end position="942"/>
    </location>
</feature>
<feature type="active site" description="4-aspartylphosphate intermediate" evidence="4">
    <location>
        <position position="351"/>
    </location>
</feature>
<feature type="binding site" evidence="6">
    <location>
        <position position="304"/>
    </location>
    <ligand>
        <name>Ca(2+)</name>
        <dbReference type="ChEBI" id="CHEBI:29108"/>
        <label>1</label>
    </ligand>
</feature>
<feature type="binding site" evidence="6">
    <location>
        <position position="305"/>
    </location>
    <ligand>
        <name>Ca(2+)</name>
        <dbReference type="ChEBI" id="CHEBI:29108"/>
        <label>1</label>
    </ligand>
</feature>
<feature type="binding site" evidence="6">
    <location>
        <position position="307"/>
    </location>
    <ligand>
        <name>Ca(2+)</name>
        <dbReference type="ChEBI" id="CHEBI:29108"/>
        <label>1</label>
    </ligand>
</feature>
<feature type="binding site" evidence="6">
    <location>
        <position position="309"/>
    </location>
    <ligand>
        <name>Ca(2+)</name>
        <dbReference type="ChEBI" id="CHEBI:29108"/>
        <label>1</label>
    </ligand>
</feature>
<feature type="binding site" evidence="6">
    <location>
        <position position="351"/>
    </location>
    <ligand>
        <name>Mg(2+)</name>
        <dbReference type="ChEBI" id="CHEBI:18420"/>
    </ligand>
</feature>
<feature type="binding site" evidence="6">
    <location>
        <position position="353"/>
    </location>
    <ligand>
        <name>ATP</name>
        <dbReference type="ChEBI" id="CHEBI:30616"/>
    </ligand>
</feature>
<feature type="binding site" evidence="6">
    <location>
        <position position="353"/>
    </location>
    <ligand>
        <name>Mg(2+)</name>
        <dbReference type="ChEBI" id="CHEBI:18420"/>
    </ligand>
</feature>
<feature type="binding site" evidence="6">
    <location>
        <position position="442"/>
    </location>
    <ligand>
        <name>ATP</name>
        <dbReference type="ChEBI" id="CHEBI:30616"/>
    </ligand>
</feature>
<feature type="binding site" evidence="6">
    <location>
        <position position="489"/>
    </location>
    <ligand>
        <name>ATP</name>
        <dbReference type="ChEBI" id="CHEBI:30616"/>
    </ligand>
</feature>
<feature type="binding site" evidence="6">
    <location>
        <position position="514"/>
    </location>
    <ligand>
        <name>ATP</name>
        <dbReference type="ChEBI" id="CHEBI:30616"/>
    </ligand>
</feature>
<feature type="binding site" evidence="4">
    <location>
        <position position="559"/>
    </location>
    <ligand>
        <name>ATP</name>
        <dbReference type="ChEBI" id="CHEBI:30616"/>
    </ligand>
</feature>
<feature type="binding site" evidence="4">
    <location>
        <position position="624"/>
    </location>
    <ligand>
        <name>ATP</name>
        <dbReference type="ChEBI" id="CHEBI:30616"/>
    </ligand>
</feature>
<feature type="binding site" evidence="4">
    <location>
        <position position="625"/>
    </location>
    <ligand>
        <name>ATP</name>
        <dbReference type="ChEBI" id="CHEBI:30616"/>
    </ligand>
</feature>
<feature type="binding site" evidence="6">
    <location>
        <position position="626"/>
    </location>
    <ligand>
        <name>ATP</name>
        <dbReference type="ChEBI" id="CHEBI:30616"/>
    </ligand>
</feature>
<feature type="binding site" evidence="6">
    <location>
        <position position="677"/>
    </location>
    <ligand>
        <name>ATP</name>
        <dbReference type="ChEBI" id="CHEBI:30616"/>
    </ligand>
</feature>
<feature type="binding site" evidence="4">
    <location>
        <position position="683"/>
    </location>
    <ligand>
        <name>ATP</name>
        <dbReference type="ChEBI" id="CHEBI:30616"/>
    </ligand>
</feature>
<feature type="binding site" evidence="6">
    <location>
        <position position="702"/>
    </location>
    <ligand>
        <name>Mg(2+)</name>
        <dbReference type="ChEBI" id="CHEBI:18420"/>
    </ligand>
</feature>
<feature type="binding site" evidence="6">
    <location>
        <position position="705"/>
    </location>
    <ligand>
        <name>ATP</name>
        <dbReference type="ChEBI" id="CHEBI:30616"/>
    </ligand>
</feature>
<feature type="binding site" evidence="6">
    <location>
        <position position="767"/>
    </location>
    <ligand>
        <name>Ca(2+)</name>
        <dbReference type="ChEBI" id="CHEBI:29108"/>
        <label>2</label>
    </ligand>
</feature>
<feature type="binding site" evidence="6">
    <location>
        <position position="770"/>
    </location>
    <ligand>
        <name>Ca(2+)</name>
        <dbReference type="ChEBI" id="CHEBI:29108"/>
        <label>2</label>
    </ligand>
</feature>
<feature type="binding site" evidence="6">
    <location>
        <position position="795"/>
    </location>
    <ligand>
        <name>Ca(2+)</name>
        <dbReference type="ChEBI" id="CHEBI:29108"/>
        <label>1</label>
    </ligand>
</feature>
<feature type="binding site" evidence="6">
    <location>
        <position position="798"/>
    </location>
    <ligand>
        <name>Ca(2+)</name>
        <dbReference type="ChEBI" id="CHEBI:29108"/>
        <label>2</label>
    </ligand>
</feature>
<feature type="binding site" evidence="6">
    <location>
        <position position="799"/>
    </location>
    <ligand>
        <name>Ca(2+)</name>
        <dbReference type="ChEBI" id="CHEBI:29108"/>
        <label>1</label>
    </ligand>
</feature>
<feature type="binding site" evidence="6">
    <location>
        <position position="799"/>
    </location>
    <ligand>
        <name>Ca(2+)</name>
        <dbReference type="ChEBI" id="CHEBI:29108"/>
        <label>2</label>
    </ligand>
</feature>
<feature type="binding site" evidence="4">
    <location>
        <position position="907"/>
    </location>
    <ligand>
        <name>Ca(2+)</name>
        <dbReference type="ChEBI" id="CHEBI:29108"/>
        <label>2</label>
    </ligand>
</feature>
<feature type="modified residue" description="Phosphoserine" evidence="3">
    <location>
        <position position="38"/>
    </location>
</feature>
<feature type="modified residue" description="3'-nitrotyrosine" evidence="7">
    <location>
        <position position="294"/>
    </location>
</feature>
<feature type="modified residue" description="3'-nitrotyrosine" evidence="7">
    <location>
        <position position="295"/>
    </location>
</feature>
<feature type="modified residue" description="Phosphothreonine" evidence="8">
    <location>
        <position position="441"/>
    </location>
</feature>
<feature type="modified residue" description="Phosphoserine" evidence="3">
    <location>
        <position position="531"/>
    </location>
</feature>
<feature type="modified residue" description="Phosphoserine" evidence="7">
    <location>
        <position position="580"/>
    </location>
</feature>
<feature type="modified residue" description="Phosphoserine" evidence="5">
    <location>
        <position position="661"/>
    </location>
</feature>
<feature type="modified residue" description="Phosphoserine" evidence="7">
    <location>
        <position position="663"/>
    </location>
</feature>
<feature type="disulfide bond" evidence="6">
    <location>
        <begin position="875"/>
        <end position="887"/>
    </location>
</feature>
<dbReference type="EC" id="7.2.2.10"/>
<dbReference type="EMBL" id="Z11500">
    <property type="protein sequence ID" value="CAA77576.1"/>
    <property type="molecule type" value="mRNA"/>
</dbReference>
<dbReference type="PIR" id="S23444">
    <property type="entry name" value="S23444"/>
</dbReference>
<dbReference type="RefSeq" id="NP_001009216.1">
    <molecule id="Q00779-1"/>
    <property type="nucleotide sequence ID" value="NM_001009216.1"/>
</dbReference>
<dbReference type="SMR" id="Q00779"/>
<dbReference type="FunCoup" id="Q00779">
    <property type="interactions" value="103"/>
</dbReference>
<dbReference type="STRING" id="9685.ENSFCAP00000024370"/>
<dbReference type="PaxDb" id="9685-ENSFCAP00000024370"/>
<dbReference type="GeneID" id="493691"/>
<dbReference type="KEGG" id="fca:493691"/>
<dbReference type="CTD" id="488"/>
<dbReference type="eggNOG" id="KOG0202">
    <property type="taxonomic scope" value="Eukaryota"/>
</dbReference>
<dbReference type="InParanoid" id="Q00779"/>
<dbReference type="OrthoDB" id="3352408at2759"/>
<dbReference type="Proteomes" id="UP000011712">
    <property type="component" value="Unplaced"/>
</dbReference>
<dbReference type="GO" id="GO:0016020">
    <property type="term" value="C:membrane"/>
    <property type="evidence" value="ECO:0000318"/>
    <property type="project" value="GO_Central"/>
</dbReference>
<dbReference type="GO" id="GO:0033017">
    <property type="term" value="C:sarcoplasmic reticulum membrane"/>
    <property type="evidence" value="ECO:0007669"/>
    <property type="project" value="UniProtKB-SubCell"/>
</dbReference>
<dbReference type="GO" id="GO:0005524">
    <property type="term" value="F:ATP binding"/>
    <property type="evidence" value="ECO:0007669"/>
    <property type="project" value="UniProtKB-KW"/>
</dbReference>
<dbReference type="GO" id="GO:0016887">
    <property type="term" value="F:ATP hydrolysis activity"/>
    <property type="evidence" value="ECO:0007669"/>
    <property type="project" value="InterPro"/>
</dbReference>
<dbReference type="GO" id="GO:0046872">
    <property type="term" value="F:metal ion binding"/>
    <property type="evidence" value="ECO:0007669"/>
    <property type="project" value="UniProtKB-KW"/>
</dbReference>
<dbReference type="GO" id="GO:0086039">
    <property type="term" value="F:P-type calcium transporter activity involved in regulation of cardiac muscle cell membrane potential"/>
    <property type="evidence" value="ECO:0000250"/>
    <property type="project" value="UniProtKB"/>
</dbReference>
<dbReference type="GO" id="GO:0000045">
    <property type="term" value="P:autophagosome assembly"/>
    <property type="evidence" value="ECO:0000250"/>
    <property type="project" value="UniProtKB"/>
</dbReference>
<dbReference type="GO" id="GO:0016240">
    <property type="term" value="P:autophagosome membrane docking"/>
    <property type="evidence" value="ECO:0000250"/>
    <property type="project" value="UniProtKB"/>
</dbReference>
<dbReference type="GO" id="GO:0070588">
    <property type="term" value="P:calcium ion transmembrane transport"/>
    <property type="evidence" value="ECO:0000250"/>
    <property type="project" value="UniProtKB"/>
</dbReference>
<dbReference type="GO" id="GO:0006874">
    <property type="term" value="P:intracellular calcium ion homeostasis"/>
    <property type="evidence" value="ECO:0000318"/>
    <property type="project" value="GO_Central"/>
</dbReference>
<dbReference type="GO" id="GO:1990456">
    <property type="term" value="P:mitochondrion-endoplasmic reticulum membrane tethering"/>
    <property type="evidence" value="ECO:0000250"/>
    <property type="project" value="UniProtKB"/>
</dbReference>
<dbReference type="GO" id="GO:0140056">
    <property type="term" value="P:organelle localization by membrane tethering"/>
    <property type="evidence" value="ECO:0000250"/>
    <property type="project" value="UniProtKB"/>
</dbReference>
<dbReference type="GO" id="GO:0010882">
    <property type="term" value="P:regulation of cardiac muscle contraction by calcium ion signaling"/>
    <property type="evidence" value="ECO:0000318"/>
    <property type="project" value="GO_Central"/>
</dbReference>
<dbReference type="CDD" id="cd02083">
    <property type="entry name" value="P-type_ATPase_SERCA"/>
    <property type="match status" value="1"/>
</dbReference>
<dbReference type="FunFam" id="2.70.150.10:FF:000143">
    <property type="entry name" value="Calcium-transporting ATPase"/>
    <property type="match status" value="1"/>
</dbReference>
<dbReference type="FunFam" id="3.40.1110.10:FF:000003">
    <property type="entry name" value="Calcium-transporting ATPase"/>
    <property type="match status" value="1"/>
</dbReference>
<dbReference type="FunFam" id="3.40.50.1000:FF:000005">
    <property type="entry name" value="Calcium-transporting ATPase 1"/>
    <property type="match status" value="1"/>
</dbReference>
<dbReference type="FunFam" id="1.20.1110.10:FF:000065">
    <property type="entry name" value="Sarcoplasmic/endoplasmic reticulum calcium ATPase 1"/>
    <property type="match status" value="3"/>
</dbReference>
<dbReference type="Gene3D" id="3.40.1110.10">
    <property type="entry name" value="Calcium-transporting ATPase, cytoplasmic domain N"/>
    <property type="match status" value="1"/>
</dbReference>
<dbReference type="Gene3D" id="2.70.150.10">
    <property type="entry name" value="Calcium-transporting ATPase, cytoplasmic transduction domain A"/>
    <property type="match status" value="1"/>
</dbReference>
<dbReference type="Gene3D" id="1.20.1110.10">
    <property type="entry name" value="Calcium-transporting ATPase, transmembrane domain"/>
    <property type="match status" value="1"/>
</dbReference>
<dbReference type="Gene3D" id="3.40.50.1000">
    <property type="entry name" value="HAD superfamily/HAD-like"/>
    <property type="match status" value="1"/>
</dbReference>
<dbReference type="InterPro" id="IPR006068">
    <property type="entry name" value="ATPase_P-typ_cation-transptr_C"/>
</dbReference>
<dbReference type="InterPro" id="IPR004014">
    <property type="entry name" value="ATPase_P-typ_cation-transptr_N"/>
</dbReference>
<dbReference type="InterPro" id="IPR023299">
    <property type="entry name" value="ATPase_P-typ_cyto_dom_N"/>
</dbReference>
<dbReference type="InterPro" id="IPR018303">
    <property type="entry name" value="ATPase_P-typ_P_site"/>
</dbReference>
<dbReference type="InterPro" id="IPR023298">
    <property type="entry name" value="ATPase_P-typ_TM_dom_sf"/>
</dbReference>
<dbReference type="InterPro" id="IPR008250">
    <property type="entry name" value="ATPase_P-typ_transduc_dom_A_sf"/>
</dbReference>
<dbReference type="InterPro" id="IPR036412">
    <property type="entry name" value="HAD-like_sf"/>
</dbReference>
<dbReference type="InterPro" id="IPR023214">
    <property type="entry name" value="HAD_sf"/>
</dbReference>
<dbReference type="InterPro" id="IPR005782">
    <property type="entry name" value="P-type_ATPase_IIA"/>
</dbReference>
<dbReference type="InterPro" id="IPR001757">
    <property type="entry name" value="P_typ_ATPase"/>
</dbReference>
<dbReference type="InterPro" id="IPR044492">
    <property type="entry name" value="P_typ_ATPase_HD_dom"/>
</dbReference>
<dbReference type="NCBIfam" id="TIGR01116">
    <property type="entry name" value="ATPase-IIA1_Ca"/>
    <property type="match status" value="1"/>
</dbReference>
<dbReference type="NCBIfam" id="TIGR01494">
    <property type="entry name" value="ATPase_P-type"/>
    <property type="match status" value="2"/>
</dbReference>
<dbReference type="PANTHER" id="PTHR42861">
    <property type="entry name" value="CALCIUM-TRANSPORTING ATPASE"/>
    <property type="match status" value="1"/>
</dbReference>
<dbReference type="Pfam" id="PF13246">
    <property type="entry name" value="Cation_ATPase"/>
    <property type="match status" value="1"/>
</dbReference>
<dbReference type="Pfam" id="PF00689">
    <property type="entry name" value="Cation_ATPase_C"/>
    <property type="match status" value="1"/>
</dbReference>
<dbReference type="Pfam" id="PF00690">
    <property type="entry name" value="Cation_ATPase_N"/>
    <property type="match status" value="1"/>
</dbReference>
<dbReference type="Pfam" id="PF00122">
    <property type="entry name" value="E1-E2_ATPase"/>
    <property type="match status" value="1"/>
</dbReference>
<dbReference type="Pfam" id="PF00702">
    <property type="entry name" value="Hydrolase"/>
    <property type="match status" value="1"/>
</dbReference>
<dbReference type="PRINTS" id="PR00119">
    <property type="entry name" value="CATATPASE"/>
</dbReference>
<dbReference type="PRINTS" id="PR00120">
    <property type="entry name" value="HATPASE"/>
</dbReference>
<dbReference type="SFLD" id="SFLDG00002">
    <property type="entry name" value="C1.7:_P-type_atpase_like"/>
    <property type="match status" value="1"/>
</dbReference>
<dbReference type="SFLD" id="SFLDF00027">
    <property type="entry name" value="p-type_atpase"/>
    <property type="match status" value="1"/>
</dbReference>
<dbReference type="SMART" id="SM00831">
    <property type="entry name" value="Cation_ATPase_N"/>
    <property type="match status" value="1"/>
</dbReference>
<dbReference type="SUPFAM" id="SSF81653">
    <property type="entry name" value="Calcium ATPase, transduction domain A"/>
    <property type="match status" value="1"/>
</dbReference>
<dbReference type="SUPFAM" id="SSF81665">
    <property type="entry name" value="Calcium ATPase, transmembrane domain M"/>
    <property type="match status" value="1"/>
</dbReference>
<dbReference type="SUPFAM" id="SSF56784">
    <property type="entry name" value="HAD-like"/>
    <property type="match status" value="1"/>
</dbReference>
<dbReference type="SUPFAM" id="SSF81660">
    <property type="entry name" value="Metal cation-transporting ATPase, ATP-binding domain N"/>
    <property type="match status" value="1"/>
</dbReference>
<dbReference type="PROSITE" id="PS00154">
    <property type="entry name" value="ATPASE_E1_E2"/>
    <property type="match status" value="1"/>
</dbReference>
<comment type="function">
    <text evidence="3 7">This magnesium-dependent enzyme catalyzes the hydrolysis of ATP coupled with the translocation of calcium from the cytosol to the sarcoplasmic reticulum lumen. Involved in autophagy in response to starvation. Upon interaction with VMP1 and activation, controls ER-isolation membrane contacts for autophagosome formation. Also modulates ER contacts with lipid droplets, mitochondria and endosomes (By similarity). In coordination with FLVCR2 mediates heme-stimulated switching from mitochondrial ATP synthesis to thermogenesis (By similarity).</text>
</comment>
<comment type="function">
    <molecule>Isoform 1</molecule>
    <text evidence="3">Involved in the regulation of the contraction/relaxation cycle. Acts as a regulator of TNFSF11-mediated Ca(2+) signaling pathways via its interaction with TMEM64 which is critical for the TNFSF11-induced CREB1 activation and mitochondrial ROS generation necessary for proper osteoclast generation. Association between TMEM64 and SERCA2 in the ER leads to cytosolic Ca(2+) spiking for activation of NFATC1 and production of mitochondrial ROS, thereby triggering Ca(2+) signaling cascades that promote osteoclast differentiation and activation.</text>
</comment>
<comment type="catalytic activity">
    <reaction evidence="7">
        <text>Ca(2+)(in) + ATP + H2O = Ca(2+)(out) + ADP + phosphate + H(+)</text>
        <dbReference type="Rhea" id="RHEA:18105"/>
        <dbReference type="ChEBI" id="CHEBI:15377"/>
        <dbReference type="ChEBI" id="CHEBI:15378"/>
        <dbReference type="ChEBI" id="CHEBI:29108"/>
        <dbReference type="ChEBI" id="CHEBI:30616"/>
        <dbReference type="ChEBI" id="CHEBI:43474"/>
        <dbReference type="ChEBI" id="CHEBI:456216"/>
        <dbReference type="EC" id="7.2.2.10"/>
    </reaction>
    <physiologicalReaction direction="left-to-right" evidence="7">
        <dbReference type="Rhea" id="RHEA:18106"/>
    </physiologicalReaction>
</comment>
<comment type="cofactor">
    <cofactor evidence="6">
        <name>Mg(2+)</name>
        <dbReference type="ChEBI" id="CHEBI:18420"/>
    </cofactor>
</comment>
<comment type="activity regulation">
    <text evidence="2 3 4 7 9">Has different conformational states with differential Ca2+ affinity. The E1 conformational state (active form) shows high Ca(2+) affinity, while the E2 state exhibits low Ca(2+) affinity. Binding of ATP allosterically increases its affinity for subsequent binding of Ca2+. Reversibly inhibited by phospholamban (PLN) at low calcium concentrations. PLN inhibits ATP2A2 Ca(2+) affinity by disrupting its allosteric activation by ATP. Inhibited by sarcolipin (SLN) and myoregulin (MRLN). The inhibition is blocked by VMP1. Enhanced by STRIT1/DWORF; STRIT1 increases activity by displacing sarcolipin (SLN), phospholamban (PLN) and myoregulin (MRLN). Stabilizes SERCA2 in its E2 state.</text>
</comment>
<comment type="subunit">
    <text evidence="3 4 7 9">Interacts with sarcolipin (SLN); the interaction inhibits ATP2A2 Ca(2+) affinity. Interacts with phospholamban (PLN); the interaction inhibits ATP2A2 Ca(2+) affinity (By similarity). Interacts with myoregulin (MRLN) (By similarity). Interacts with ARLN and ERLN; the interactions inhibit ATP2A2 Ca(2+) affinity (By similarity). Interacts with STRIT1/DWORF; the interaction results in activation of ATP2A2 (By similarity). Interacts with the monomeric forms of SLN, PLN, ARLN, ERLN and STRI1/DWORF (By similarity). Interacts with HAX1 (By similarity). Interacts with S100A8 and S100A9 (By similarity). Interacts with SLC35G1 and STIM1. Interacts with TMEM203 (By similarity). Interacts with TMEM64 and PDIA3 (By similarity). Interacts with TMX1 (By similarity). Interacts with TMX2 (By similarity). Interacts with VMP1; VMP1 competes with PLN and SLN to prevent them from forming an inhibitory complex with ATP2A2. Interacts with ULK1 (By similarity). Interacts with S100A1 in a Ca(2+)-dependent manner (By similarity). Interacts with TUNAR (By similarity). Interacts with FLVCR2; this interaction occurs in the absence of heme and promotes ATP2A2 proteasomal degradation; this complex is dissociated upon heme binding. Interacts with FNIP1.</text>
</comment>
<comment type="subunit">
    <molecule>Isoform 1</molecule>
    <text evidence="7">Interacts with TRAM2 (via C-terminus).</text>
</comment>
<comment type="subcellular location">
    <subcellularLocation>
        <location evidence="3">Endoplasmic reticulum membrane</location>
        <topology evidence="10">Multi-pass membrane protein</topology>
    </subcellularLocation>
    <subcellularLocation>
        <location evidence="3">Sarcoplasmic reticulum membrane</location>
        <topology evidence="10">Multi-pass membrane protein</topology>
    </subcellularLocation>
    <text evidence="3">Colocalizes with FLVCR2 at the mitochondrial-ER contact junction.</text>
</comment>
<comment type="alternative products">
    <event type="alternative splicing"/>
    <isoform>
        <id>Q00779-1</id>
        <name>1</name>
        <name>ATP2A2A</name>
        <name>SERCA2a</name>
        <sequence type="displayed"/>
    </isoform>
    <isoform>
        <id>Q00779-2</id>
        <name>2</name>
        <name>ATP2A2B</name>
        <name>SERCA2b</name>
        <sequence type="not described"/>
    </isoform>
</comment>
<comment type="tissue specificity">
    <text>Isoform 1 is expressed in the heart.</text>
</comment>
<comment type="domain">
    <text evidence="4">Ca(2+) and ATP binding cause major rearrangements of the cytoplasmic and transmembrane domains. According to the E1-E2 model, Ca(2+) binding to the cytosolic domain of the pump in the high-affinity E1 conformation is followed by the ATP-dependent phosphorylation of the active site Asp, giving rise to E1P. A conformational change of the phosphoenzyme gives rise to the low-affinity E2P state that exposes the Ca(2+) ions to the lumenal side and promotes Ca(2+) release. Dephosphorylation of the active site Asp mediates the subsequent return to the E1 conformation.</text>
</comment>
<comment type="domain">
    <text evidence="4">PLN and SLN both have a single transmembrane helix; both occupy a similar binding site that is situated between the ATP2A2 transmembrane helices.</text>
</comment>
<comment type="PTM">
    <text evidence="7">Nitrated under oxidative stress. Nitration on the two tyrosine residues inhibits catalytic activity.</text>
</comment>
<comment type="PTM">
    <text evidence="3">Serotonylated on Gln residues by TGM2 in response to hypoxia, leading to its inactivation.</text>
</comment>
<comment type="similarity">
    <text evidence="11">Belongs to the cation transport ATPase (P-type) (TC 3.A.3) family. Type IIA subfamily.</text>
</comment>
<reference key="1">
    <citation type="journal article" date="1992" name="Biochim. Biophys. Acta">
        <title>Sequence of the feline cardiac sarcoplasmic reticulum Ca(2+)-ATPase.</title>
        <authorList>
            <person name="Gambel A.M."/>
            <person name="Gallien T.N."/>
            <person name="Dantzler-Whitworth T."/>
            <person name="Bowes J."/>
            <person name="Menick D.R."/>
        </authorList>
    </citation>
    <scope>NUCLEOTIDE SEQUENCE [MRNA]</scope>
    <source>
        <tissue>Heart</tissue>
    </source>
</reference>
<accession>Q00779</accession>
<sequence length="997" mass="109712">MENAHTKTVEEVLGYFGVNESTGLSLEQVKKLKERWGSNELPAEEGKTLLELVIEQFEDLLVRILLLAACISFVLAWFEEGEETITAFVEPFVILLILVANAIVGVWQERNAENAIEALKEYEPEMGKVYRQDRKSVQRIKAKDIVPGDIVEIAVGDKVPADIRLTSIKSTTLRVDQSILTGESVSVIKHTDPVPDPRAVNQDKKNMLFSGTNIAAGKAMGVVVATGVNTEIGKIRDEMVATEQERTPLQQKLDEFGEQLSKVISLICIAVWIINIGHFNDPVHGGSWIRGAIYYFKIAVALAVAAIPEGLPAVITTCLALGTRRMAKKNAIVRSLPSVETLGCTSVICSDKTGTLTTNQMSVCRMFILDKVEGDTCSLNEFTITGSTYAPIGEVHKDDKPVKCHQYDGLVELATICALCNDSALDYNEAKGVYKKFGEATETALTCLVEKMNVFDTELKGLSKIERANACNSVIKQLMKKEFTLEFSRDRKSMSVYCTPNKPSRTSMSKMFVKGAPEGVIDRCTHIRVGSTKVPMTPGVKQKVMSVIREWGSGSDTLRCLALATHDNPLRREEMNLEDSANFIKYETNLTFVGCVGMLDPPRIEVASSVKLCRQAGIRVIMITGDNKGTAVAICRRIGIFGQDEDVTSKAFTGREFDELSPSAQRDACLNARCFARVEPSHKSKIVEFLQSFDEITAMTGDGVNDAPALKKSEIGIAMGSGTAVAKTASEMVLADDNFSTIVAAVEEGRAIYNNMKQFIRYLISSNVGEVVCIFLTAALGFPEALIPVQLLWVNLVTDGLPATALGFNPPDLDIMNKPPRNPKEPLISGWLFFRYLAIGCYVGAATVGAAAWWFIAADGGPRVSFYQLSHFLQCKDDNPDFEGVDCAIFESPYPMTMALSVLVTIEMCNALNSLSENQSLLRMPPWENIWLVGSICLSMSLHFLILYVEPLPLIFQITPLNLTQWLMVLKISLPVILMDETLKFVARNYLEPAILE</sequence>
<organism>
    <name type="scientific">Felis catus</name>
    <name type="common">Cat</name>
    <name type="synonym">Felis silvestris catus</name>
    <dbReference type="NCBI Taxonomy" id="9685"/>
    <lineage>
        <taxon>Eukaryota</taxon>
        <taxon>Metazoa</taxon>
        <taxon>Chordata</taxon>
        <taxon>Craniata</taxon>
        <taxon>Vertebrata</taxon>
        <taxon>Euteleostomi</taxon>
        <taxon>Mammalia</taxon>
        <taxon>Eutheria</taxon>
        <taxon>Laurasiatheria</taxon>
        <taxon>Carnivora</taxon>
        <taxon>Feliformia</taxon>
        <taxon>Felidae</taxon>
        <taxon>Felinae</taxon>
        <taxon>Felis</taxon>
    </lineage>
</organism>
<name>AT2A2_FELCA</name>